<gene>
    <name type="primary">Or67a</name>
    <name type="ORF">CG12526</name>
</gene>
<protein>
    <recommendedName>
        <fullName>Odorant receptor 67a</fullName>
    </recommendedName>
</protein>
<organism>
    <name type="scientific">Drosophila melanogaster</name>
    <name type="common">Fruit fly</name>
    <dbReference type="NCBI Taxonomy" id="7227"/>
    <lineage>
        <taxon>Eukaryota</taxon>
        <taxon>Metazoa</taxon>
        <taxon>Ecdysozoa</taxon>
        <taxon>Arthropoda</taxon>
        <taxon>Hexapoda</taxon>
        <taxon>Insecta</taxon>
        <taxon>Pterygota</taxon>
        <taxon>Neoptera</taxon>
        <taxon>Endopterygota</taxon>
        <taxon>Diptera</taxon>
        <taxon>Brachycera</taxon>
        <taxon>Muscomorpha</taxon>
        <taxon>Ephydroidea</taxon>
        <taxon>Drosophilidae</taxon>
        <taxon>Drosophila</taxon>
        <taxon>Sophophora</taxon>
    </lineage>
</organism>
<feature type="chain" id="PRO_0000174262" description="Odorant receptor 67a">
    <location>
        <begin position="1"/>
        <end position="407"/>
    </location>
</feature>
<feature type="topological domain" description="Cytoplasmic" evidence="2">
    <location>
        <begin position="1"/>
        <end position="40"/>
    </location>
</feature>
<feature type="transmembrane region" description="Helical; Name=1" evidence="2">
    <location>
        <begin position="41"/>
        <end position="61"/>
    </location>
</feature>
<feature type="topological domain" description="Extracellular" evidence="2">
    <location>
        <begin position="62"/>
        <end position="79"/>
    </location>
</feature>
<feature type="transmembrane region" description="Helical; Name=2" evidence="2">
    <location>
        <begin position="80"/>
        <end position="100"/>
    </location>
</feature>
<feature type="topological domain" description="Cytoplasmic" evidence="2">
    <location>
        <begin position="101"/>
        <end position="144"/>
    </location>
</feature>
<feature type="transmembrane region" description="Helical; Name=3" evidence="2">
    <location>
        <begin position="145"/>
        <end position="165"/>
    </location>
</feature>
<feature type="topological domain" description="Extracellular" evidence="2">
    <location>
        <begin position="166"/>
        <end position="208"/>
    </location>
</feature>
<feature type="transmembrane region" description="Helical; Name=4" evidence="2">
    <location>
        <begin position="209"/>
        <end position="229"/>
    </location>
</feature>
<feature type="topological domain" description="Cytoplasmic" evidence="2">
    <location>
        <begin position="230"/>
        <end position="278"/>
    </location>
</feature>
<feature type="transmembrane region" description="Helical; Name=5" evidence="2">
    <location>
        <begin position="279"/>
        <end position="300"/>
    </location>
</feature>
<feature type="topological domain" description="Extracellular" evidence="2">
    <location>
        <begin position="301"/>
        <end position="314"/>
    </location>
</feature>
<feature type="transmembrane region" description="Helical; Name=6" evidence="2">
    <location>
        <begin position="315"/>
        <end position="331"/>
    </location>
</feature>
<feature type="topological domain" description="Cytoplasmic" evidence="2">
    <location>
        <begin position="332"/>
        <end position="378"/>
    </location>
</feature>
<feature type="transmembrane region" description="Helical; Name=7" evidence="2">
    <location>
        <begin position="379"/>
        <end position="401"/>
    </location>
</feature>
<feature type="topological domain" description="Extracellular" evidence="2">
    <location>
        <begin position="402"/>
        <end position="407"/>
    </location>
</feature>
<accession>Q9VT08</accession>
<accession>B3DMT0</accession>
<name>OR67A_DROME</name>
<keyword id="KW-1003">Cell membrane</keyword>
<keyword id="KW-0472">Membrane</keyword>
<keyword id="KW-0552">Olfaction</keyword>
<keyword id="KW-0675">Receptor</keyword>
<keyword id="KW-1185">Reference proteome</keyword>
<keyword id="KW-0716">Sensory transduction</keyword>
<keyword id="KW-0807">Transducer</keyword>
<keyword id="KW-0812">Transmembrane</keyword>
<keyword id="KW-1133">Transmembrane helix</keyword>
<dbReference type="EMBL" id="AE014296">
    <property type="protein sequence ID" value="AAF50248.2"/>
    <property type="molecule type" value="Genomic_DNA"/>
</dbReference>
<dbReference type="EMBL" id="BT032718">
    <property type="protein sequence ID" value="ACD81732.1"/>
    <property type="molecule type" value="mRNA"/>
</dbReference>
<dbReference type="RefSeq" id="NP_524005.2">
    <property type="nucleotide sequence ID" value="NM_079281.4"/>
</dbReference>
<dbReference type="SMR" id="Q9VT08"/>
<dbReference type="FunCoup" id="Q9VT08">
    <property type="interactions" value="40"/>
</dbReference>
<dbReference type="STRING" id="7227.FBpp0076104"/>
<dbReference type="PaxDb" id="7227-FBpp0076104"/>
<dbReference type="DNASU" id="39109"/>
<dbReference type="EnsemblMetazoa" id="FBtr0076375">
    <property type="protein sequence ID" value="FBpp0076104"/>
    <property type="gene ID" value="FBgn0036009"/>
</dbReference>
<dbReference type="GeneID" id="39109"/>
<dbReference type="KEGG" id="dme:Dmel_CG12526"/>
<dbReference type="AGR" id="FB:FBgn0036009"/>
<dbReference type="CTD" id="39109"/>
<dbReference type="FlyBase" id="FBgn0036009">
    <property type="gene designation" value="Or67a"/>
</dbReference>
<dbReference type="VEuPathDB" id="VectorBase:FBgn0036009"/>
<dbReference type="eggNOG" id="ENOG502SR0T">
    <property type="taxonomic scope" value="Eukaryota"/>
</dbReference>
<dbReference type="GeneTree" id="ENSGT00560000077544"/>
<dbReference type="HOGENOM" id="CLU_033399_0_0_1"/>
<dbReference type="InParanoid" id="Q9VT08"/>
<dbReference type="OMA" id="VIMHYER"/>
<dbReference type="OrthoDB" id="8185860at2759"/>
<dbReference type="PhylomeDB" id="Q9VT08"/>
<dbReference type="BioGRID-ORCS" id="39109">
    <property type="hits" value="0 hits in 1 CRISPR screen"/>
</dbReference>
<dbReference type="GenomeRNAi" id="39109"/>
<dbReference type="PRO" id="PR:Q9VT08"/>
<dbReference type="Proteomes" id="UP000000803">
    <property type="component" value="Chromosome 3L"/>
</dbReference>
<dbReference type="Bgee" id="FBgn0036009">
    <property type="expression patterns" value="Expressed in antenna and 2 other cell types or tissues"/>
</dbReference>
<dbReference type="ExpressionAtlas" id="Q9VT08">
    <property type="expression patterns" value="baseline and differential"/>
</dbReference>
<dbReference type="GO" id="GO:0032590">
    <property type="term" value="C:dendrite membrane"/>
    <property type="evidence" value="ECO:0000250"/>
    <property type="project" value="FlyBase"/>
</dbReference>
<dbReference type="GO" id="GO:0005886">
    <property type="term" value="C:plasma membrane"/>
    <property type="evidence" value="ECO:0007005"/>
    <property type="project" value="FlyBase"/>
</dbReference>
<dbReference type="GO" id="GO:0170020">
    <property type="term" value="F:ionotropic olfactory receptor activity"/>
    <property type="evidence" value="ECO:0007005"/>
    <property type="project" value="FlyBase"/>
</dbReference>
<dbReference type="GO" id="GO:0005549">
    <property type="term" value="F:odorant binding"/>
    <property type="evidence" value="ECO:0000353"/>
    <property type="project" value="FlyBase"/>
</dbReference>
<dbReference type="GO" id="GO:0004984">
    <property type="term" value="F:olfactory receptor activity"/>
    <property type="evidence" value="ECO:0000318"/>
    <property type="project" value="GO_Central"/>
</dbReference>
<dbReference type="GO" id="GO:0050911">
    <property type="term" value="P:detection of chemical stimulus involved in sensory perception of smell"/>
    <property type="evidence" value="ECO:0007005"/>
    <property type="project" value="FlyBase"/>
</dbReference>
<dbReference type="GO" id="GO:0007165">
    <property type="term" value="P:signal transduction"/>
    <property type="evidence" value="ECO:0007669"/>
    <property type="project" value="UniProtKB-KW"/>
</dbReference>
<dbReference type="InterPro" id="IPR004117">
    <property type="entry name" value="7tm6_olfct_rcpt"/>
</dbReference>
<dbReference type="PANTHER" id="PTHR21137">
    <property type="entry name" value="ODORANT RECEPTOR"/>
    <property type="match status" value="1"/>
</dbReference>
<dbReference type="PANTHER" id="PTHR21137:SF44">
    <property type="entry name" value="ODORANT RECEPTOR 13A-RELATED"/>
    <property type="match status" value="1"/>
</dbReference>
<dbReference type="Pfam" id="PF02949">
    <property type="entry name" value="7tm_6"/>
    <property type="match status" value="1"/>
</dbReference>
<sequence>MDNVAEMPEEKYVEVDDFLRLAVKFYNTLGIDPYETGRKRTIWFQIYFALNMFNMVFSFYAEVATLVDRLRDNENFLESCILLSYVSFVVMGLSKIGAVMKKKPKMTALVRQLETCFPSPSAKVQEEYAVKSWLKRCHIYTKGFGGLFMIMYFAHALIPLFIYFIQRVLLHYPDAKQIMPFYQLEPWEFRDSWLFYPSYFHQSSAGYTATCGSIAGDLMIFAVVLQVIMHYERLAKVLREFKIQAHNAPNGAKEDIRKLQSLVANHIDILRLTDLMNEVFGIPLLLNFIASALLVCLVGVQLTIALSPEYFCKQMLFLISVLLEVYLLCSFSQRLIDASENVGHAAYDMDWLGSDKRFKKILIFISMRSQKPVCLKATVVLDLSMPTMSIFLGMSYKFFCAVRTMYQ</sequence>
<evidence type="ECO:0000250" key="1"/>
<evidence type="ECO:0000255" key="2"/>
<evidence type="ECO:0000269" key="3">
    <source>
    </source>
</evidence>
<evidence type="ECO:0000269" key="4">
    <source>
    </source>
</evidence>
<evidence type="ECO:0000269" key="5">
    <source>
    </source>
</evidence>
<evidence type="ECO:0000269" key="6">
    <source>
    </source>
</evidence>
<evidence type="ECO:0000305" key="7"/>
<comment type="function">
    <text evidence="4 5 6">Odorant receptor which mediates acceptance or avoidance behavior, depending on its substrates. The odorant receptor repertoire encodes a large collection of odor stimuli that vary widely in identity, intensity, and duration. Forms a complex with Orco to form odorant-sensing units, providing sensitive and prolonged odorant signaling and calcium permeability. Involved in the behavioral responses to benzaldehyde and acetophenone.</text>
</comment>
<comment type="subunit">
    <text evidence="6">Interacts with Orco. Complexes exist early in the endomembrane system in olfactory sensory neurons (OSNs), coupling these complexes to the conserved ciliary trafficking pathway.</text>
</comment>
<comment type="subcellular location">
    <subcellularLocation>
        <location evidence="1">Cell membrane</location>
        <topology evidence="1">Multi-pass membrane protein</topology>
    </subcellularLocation>
</comment>
<comment type="tissue specificity">
    <text evidence="3">Expressed in olfactory sensory neurons in the antenna.</text>
</comment>
<comment type="miscellaneous">
    <text>The atypical heteromeric and topological design of the odorant receptors appears to be an insect-specific solution for odor recognition, making the OR/Orco complex an attractive target for the development of highly selective insect repellents to disrupt olfactory-mediated host-seeking behaviors of insect disease vectors. Odor-evoked OR currents are independent of known G-protein-coupled second messenger pathways.</text>
</comment>
<comment type="similarity">
    <text evidence="7">Belongs to the insect chemoreceptor superfamily. Heteromeric odorant receptor channel (TC 1.A.69) family. Or49a subfamily.</text>
</comment>
<reference key="1">
    <citation type="journal article" date="2000" name="Science">
        <title>The genome sequence of Drosophila melanogaster.</title>
        <authorList>
            <person name="Adams M.D."/>
            <person name="Celniker S.E."/>
            <person name="Holt R.A."/>
            <person name="Evans C.A."/>
            <person name="Gocayne J.D."/>
            <person name="Amanatides P.G."/>
            <person name="Scherer S.E."/>
            <person name="Li P.W."/>
            <person name="Hoskins R.A."/>
            <person name="Galle R.F."/>
            <person name="George R.A."/>
            <person name="Lewis S.E."/>
            <person name="Richards S."/>
            <person name="Ashburner M."/>
            <person name="Henderson S.N."/>
            <person name="Sutton G.G."/>
            <person name="Wortman J.R."/>
            <person name="Yandell M.D."/>
            <person name="Zhang Q."/>
            <person name="Chen L.X."/>
            <person name="Brandon R.C."/>
            <person name="Rogers Y.-H.C."/>
            <person name="Blazej R.G."/>
            <person name="Champe M."/>
            <person name="Pfeiffer B.D."/>
            <person name="Wan K.H."/>
            <person name="Doyle C."/>
            <person name="Baxter E.G."/>
            <person name="Helt G."/>
            <person name="Nelson C.R."/>
            <person name="Miklos G.L.G."/>
            <person name="Abril J.F."/>
            <person name="Agbayani A."/>
            <person name="An H.-J."/>
            <person name="Andrews-Pfannkoch C."/>
            <person name="Baldwin D."/>
            <person name="Ballew R.M."/>
            <person name="Basu A."/>
            <person name="Baxendale J."/>
            <person name="Bayraktaroglu L."/>
            <person name="Beasley E.M."/>
            <person name="Beeson K.Y."/>
            <person name="Benos P.V."/>
            <person name="Berman B.P."/>
            <person name="Bhandari D."/>
            <person name="Bolshakov S."/>
            <person name="Borkova D."/>
            <person name="Botchan M.R."/>
            <person name="Bouck J."/>
            <person name="Brokstein P."/>
            <person name="Brottier P."/>
            <person name="Burtis K.C."/>
            <person name="Busam D.A."/>
            <person name="Butler H."/>
            <person name="Cadieu E."/>
            <person name="Center A."/>
            <person name="Chandra I."/>
            <person name="Cherry J.M."/>
            <person name="Cawley S."/>
            <person name="Dahlke C."/>
            <person name="Davenport L.B."/>
            <person name="Davies P."/>
            <person name="de Pablos B."/>
            <person name="Delcher A."/>
            <person name="Deng Z."/>
            <person name="Mays A.D."/>
            <person name="Dew I."/>
            <person name="Dietz S.M."/>
            <person name="Dodson K."/>
            <person name="Doup L.E."/>
            <person name="Downes M."/>
            <person name="Dugan-Rocha S."/>
            <person name="Dunkov B.C."/>
            <person name="Dunn P."/>
            <person name="Durbin K.J."/>
            <person name="Evangelista C.C."/>
            <person name="Ferraz C."/>
            <person name="Ferriera S."/>
            <person name="Fleischmann W."/>
            <person name="Fosler C."/>
            <person name="Gabrielian A.E."/>
            <person name="Garg N.S."/>
            <person name="Gelbart W.M."/>
            <person name="Glasser K."/>
            <person name="Glodek A."/>
            <person name="Gong F."/>
            <person name="Gorrell J.H."/>
            <person name="Gu Z."/>
            <person name="Guan P."/>
            <person name="Harris M."/>
            <person name="Harris N.L."/>
            <person name="Harvey D.A."/>
            <person name="Heiman T.J."/>
            <person name="Hernandez J.R."/>
            <person name="Houck J."/>
            <person name="Hostin D."/>
            <person name="Houston K.A."/>
            <person name="Howland T.J."/>
            <person name="Wei M.-H."/>
            <person name="Ibegwam C."/>
            <person name="Jalali M."/>
            <person name="Kalush F."/>
            <person name="Karpen G.H."/>
            <person name="Ke Z."/>
            <person name="Kennison J.A."/>
            <person name="Ketchum K.A."/>
            <person name="Kimmel B.E."/>
            <person name="Kodira C.D."/>
            <person name="Kraft C.L."/>
            <person name="Kravitz S."/>
            <person name="Kulp D."/>
            <person name="Lai Z."/>
            <person name="Lasko P."/>
            <person name="Lei Y."/>
            <person name="Levitsky A.A."/>
            <person name="Li J.H."/>
            <person name="Li Z."/>
            <person name="Liang Y."/>
            <person name="Lin X."/>
            <person name="Liu X."/>
            <person name="Mattei B."/>
            <person name="McIntosh T.C."/>
            <person name="McLeod M.P."/>
            <person name="McPherson D."/>
            <person name="Merkulov G."/>
            <person name="Milshina N.V."/>
            <person name="Mobarry C."/>
            <person name="Morris J."/>
            <person name="Moshrefi A."/>
            <person name="Mount S.M."/>
            <person name="Moy M."/>
            <person name="Murphy B."/>
            <person name="Murphy L."/>
            <person name="Muzny D.M."/>
            <person name="Nelson D.L."/>
            <person name="Nelson D.R."/>
            <person name="Nelson K.A."/>
            <person name="Nixon K."/>
            <person name="Nusskern D.R."/>
            <person name="Pacleb J.M."/>
            <person name="Palazzolo M."/>
            <person name="Pittman G.S."/>
            <person name="Pan S."/>
            <person name="Pollard J."/>
            <person name="Puri V."/>
            <person name="Reese M.G."/>
            <person name="Reinert K."/>
            <person name="Remington K."/>
            <person name="Saunders R.D.C."/>
            <person name="Scheeler F."/>
            <person name="Shen H."/>
            <person name="Shue B.C."/>
            <person name="Siden-Kiamos I."/>
            <person name="Simpson M."/>
            <person name="Skupski M.P."/>
            <person name="Smith T.J."/>
            <person name="Spier E."/>
            <person name="Spradling A.C."/>
            <person name="Stapleton M."/>
            <person name="Strong R."/>
            <person name="Sun E."/>
            <person name="Svirskas R."/>
            <person name="Tector C."/>
            <person name="Turner R."/>
            <person name="Venter E."/>
            <person name="Wang A.H."/>
            <person name="Wang X."/>
            <person name="Wang Z.-Y."/>
            <person name="Wassarman D.A."/>
            <person name="Weinstock G.M."/>
            <person name="Weissenbach J."/>
            <person name="Williams S.M."/>
            <person name="Woodage T."/>
            <person name="Worley K.C."/>
            <person name="Wu D."/>
            <person name="Yang S."/>
            <person name="Yao Q.A."/>
            <person name="Ye J."/>
            <person name="Yeh R.-F."/>
            <person name="Zaveri J.S."/>
            <person name="Zhan M."/>
            <person name="Zhang G."/>
            <person name="Zhao Q."/>
            <person name="Zheng L."/>
            <person name="Zheng X.H."/>
            <person name="Zhong F.N."/>
            <person name="Zhong W."/>
            <person name="Zhou X."/>
            <person name="Zhu S.C."/>
            <person name="Zhu X."/>
            <person name="Smith H.O."/>
            <person name="Gibbs R.A."/>
            <person name="Myers E.W."/>
            <person name="Rubin G.M."/>
            <person name="Venter J.C."/>
        </authorList>
    </citation>
    <scope>NUCLEOTIDE SEQUENCE [LARGE SCALE GENOMIC DNA]</scope>
    <source>
        <strain>Berkeley</strain>
    </source>
</reference>
<reference key="2">
    <citation type="journal article" date="2002" name="Genome Biol.">
        <title>Annotation of the Drosophila melanogaster euchromatic genome: a systematic review.</title>
        <authorList>
            <person name="Misra S."/>
            <person name="Crosby M.A."/>
            <person name="Mungall C.J."/>
            <person name="Matthews B.B."/>
            <person name="Campbell K.S."/>
            <person name="Hradecky P."/>
            <person name="Huang Y."/>
            <person name="Kaminker J.S."/>
            <person name="Millburn G.H."/>
            <person name="Prochnik S.E."/>
            <person name="Smith C.D."/>
            <person name="Tupy J.L."/>
            <person name="Whitfield E.J."/>
            <person name="Bayraktaroglu L."/>
            <person name="Berman B.P."/>
            <person name="Bettencourt B.R."/>
            <person name="Celniker S.E."/>
            <person name="de Grey A.D.N.J."/>
            <person name="Drysdale R.A."/>
            <person name="Harris N.L."/>
            <person name="Richter J."/>
            <person name="Russo S."/>
            <person name="Schroeder A.J."/>
            <person name="Shu S.Q."/>
            <person name="Stapleton M."/>
            <person name="Yamada C."/>
            <person name="Ashburner M."/>
            <person name="Gelbart W.M."/>
            <person name="Rubin G.M."/>
            <person name="Lewis S.E."/>
        </authorList>
    </citation>
    <scope>GENOME REANNOTATION</scope>
    <source>
        <strain>Berkeley</strain>
    </source>
</reference>
<reference key="3">
    <citation type="submission" date="2008-05" db="EMBL/GenBank/DDBJ databases">
        <authorList>
            <person name="Carlson J.W."/>
            <person name="Booth B."/>
            <person name="Frise E."/>
            <person name="Park S."/>
            <person name="Wan K.H."/>
            <person name="Yu C."/>
            <person name="Celniker S.E."/>
        </authorList>
    </citation>
    <scope>NUCLEOTIDE SEQUENCE [LARGE SCALE MRNA]</scope>
    <source>
        <strain>Berkeley</strain>
    </source>
</reference>
<reference key="4">
    <citation type="journal article" date="2000" name="Cell">
        <title>An olfactory sensory map in the fly brain.</title>
        <authorList>
            <person name="Vosshall L.B."/>
            <person name="Wong A.M."/>
            <person name="Axel R."/>
        </authorList>
    </citation>
    <scope>TISSUE SPECIFICITY</scope>
</reference>
<reference key="5">
    <citation type="journal article" date="2006" name="Cell">
        <title>Coding of odors by a receptor repertoire.</title>
        <authorList>
            <person name="Hallem E.A."/>
            <person name="Carlson J.R."/>
        </authorList>
    </citation>
    <scope>FUNCTION</scope>
</reference>
<reference key="6">
    <citation type="journal article" date="2010" name="Genetics">
        <title>Odorant receptor polymorphisms and natural variation in olfactory behavior in Drosophila melanogaster.</title>
        <authorList>
            <person name="Rollmann S.M."/>
            <person name="Wang P."/>
            <person name="Date P."/>
            <person name="West S.A."/>
            <person name="Mackay T.F."/>
            <person name="Anholt R.R."/>
        </authorList>
    </citation>
    <scope>FUNCTION</scope>
</reference>
<reference key="7">
    <citation type="journal article" date="2011" name="Chem. Senses">
        <title>Subunit contributions to insect olfactory receptor function: channel block and odorant recognition.</title>
        <authorList>
            <person name="Nichols A.S."/>
            <person name="Chen S."/>
            <person name="Luetje C.W."/>
        </authorList>
    </citation>
    <scope>INTERACTION WITH ORCO</scope>
    <scope>FUNCTION</scope>
</reference>
<proteinExistence type="evidence at protein level"/>